<evidence type="ECO:0000250" key="1">
    <source>
        <dbReference type="UniProtKB" id="O77480"/>
    </source>
</evidence>
<evidence type="ECO:0000255" key="2"/>
<evidence type="ECO:0000269" key="3">
    <source>
    </source>
</evidence>
<evidence type="ECO:0000269" key="4">
    <source>
    </source>
</evidence>
<evidence type="ECO:0000269" key="5">
    <source>
    </source>
</evidence>
<evidence type="ECO:0000303" key="6">
    <source>
    </source>
</evidence>
<evidence type="ECO:0000305" key="7"/>
<feature type="transit peptide" description="Mitochondrion" evidence="2">
    <location>
        <begin position="1"/>
        <end status="unknown"/>
    </location>
</feature>
<feature type="chain" id="PRO_0000010093" description="Methionyl-tRNA formyltransferase, mitochondrial">
    <location>
        <begin status="unknown"/>
        <end position="389"/>
    </location>
</feature>
<feature type="splice variant" id="VSP_057059" description="In isoform 2." evidence="6">
    <original>GILN</original>
    <variation>SFQF</variation>
    <location>
        <begin position="141"/>
        <end position="144"/>
    </location>
</feature>
<feature type="splice variant" id="VSP_057060" description="In isoform 2." evidence="6">
    <location>
        <begin position="145"/>
        <end position="389"/>
    </location>
</feature>
<feature type="sequence variant" id="VAR_059289" description="In dbSNP:rs2946655.">
    <original>V</original>
    <variation>A</variation>
    <location>
        <position position="5"/>
    </location>
</feature>
<feature type="sequence variant" id="VAR_069303" description="In COXPD15; loss of methionyl-tRNA formyltransferase activity; dbSNP:rs397514614." evidence="3 5">
    <original>S</original>
    <variation>L</variation>
    <location>
        <position position="125"/>
    </location>
</feature>
<feature type="sequence variant" id="VAR_069304" description="In COXPD15 and MC1DN27; decreased methionyl-tRNA formyltransferase activity; dbSNP:rs201431517." evidence="3 4 5">
    <original>S</original>
    <variation>L</variation>
    <location>
        <position position="209"/>
    </location>
</feature>
<feature type="sequence variant" id="VAR_081461" description="In MC1DN27." evidence="4">
    <location>
        <begin position="332"/>
        <end position="389"/>
    </location>
</feature>
<accession>Q96DP5</accession>
<accession>B7Z734</accession>
<comment type="function">
    <text evidence="3 5">Methionyl-tRNA formyltransferase that formylates methionyl-tRNA in mitochondria and is crucial for translation initiation.</text>
</comment>
<comment type="catalytic activity">
    <reaction evidence="5">
        <text>L-methionyl-tRNA(fMet) + (6R)-10-formyltetrahydrofolate = N-formyl-L-methionyl-tRNA(fMet) + (6S)-5,6,7,8-tetrahydrofolate + H(+)</text>
        <dbReference type="Rhea" id="RHEA:24380"/>
        <dbReference type="Rhea" id="RHEA-COMP:9952"/>
        <dbReference type="Rhea" id="RHEA-COMP:9953"/>
        <dbReference type="ChEBI" id="CHEBI:15378"/>
        <dbReference type="ChEBI" id="CHEBI:57453"/>
        <dbReference type="ChEBI" id="CHEBI:78530"/>
        <dbReference type="ChEBI" id="CHEBI:78844"/>
        <dbReference type="ChEBI" id="CHEBI:195366"/>
        <dbReference type="EC" id="2.1.2.9"/>
    </reaction>
    <physiologicalReaction direction="left-to-right" evidence="3">
        <dbReference type="Rhea" id="RHEA:24381"/>
    </physiologicalReaction>
</comment>
<comment type="subcellular location">
    <subcellularLocation>
        <location evidence="1">Mitochondrion</location>
    </subcellularLocation>
</comment>
<comment type="alternative products">
    <event type="alternative splicing"/>
    <isoform>
        <id>Q96DP5-1</id>
        <name>1</name>
        <sequence type="displayed"/>
    </isoform>
    <isoform>
        <id>Q96DP5-2</id>
        <name>2</name>
        <sequence type="described" ref="VSP_057059 VSP_057060"/>
    </isoform>
</comment>
<comment type="domain">
    <text>Composed of an N- and a C-terminal domain. The N-terminal domain carries the tetrahydrofolate (THF)-binding site and the C-terminal domain is presumably involved in positioning the Met-tRNA substrate for the formylation reaction.</text>
</comment>
<comment type="disease" evidence="3 5">
    <disease id="DI-03631">
        <name>Combined oxidative phosphorylation deficiency 15</name>
        <acronym>COXPD15</acronym>
        <description>An autosomal recessive, mitochondrial, neurologic disorder characterized by features of Leigh syndrome and combined oxidative phosphorylation deficiency. Clinical features include mild global developmental delay, white matter abnormalities, ataxia, incoordination, speech and reading difficulties, T2-weighted hyperintensities in the basal ganglia, corpus callosum, and brainstem.</description>
        <dbReference type="MIM" id="614947"/>
    </disease>
    <text>The disease is caused by variants affecting the gene represented in this entry.</text>
</comment>
<comment type="disease" evidence="4">
    <disease id="DI-05423">
        <name>Mitochondrial complex I deficiency, nuclear type 27</name>
        <acronym>MC1DN27</acronym>
        <description>A form of mitochondrial complex I deficiency, the most common biochemical signature of mitochondrial disorders, a group of highly heterogeneous conditions characterized by defective oxidative phosphorylation, which collectively affects 1 in 5-10000 live births. Clinical disorders have variable severity, ranging from lethal neonatal disease to adult-onset neurodegenerative disorders. Phenotypes include macrocephaly with progressive leukodystrophy, non-specific encephalopathy, cardiomyopathy, myopathy, liver disease, Leigh syndrome, Leber hereditary optic neuropathy, and some forms of Parkinson disease. MC1DN27 transmission pattern is consistent with autosomal recessive inheritance.</description>
        <dbReference type="MIM" id="618248"/>
    </disease>
    <text>The disease is caused by variants affecting the gene represented in this entry.</text>
</comment>
<comment type="similarity">
    <text evidence="7">Belongs to the Fmt family.</text>
</comment>
<comment type="sequence caution" evidence="7">
    <conflict type="erroneous initiation">
        <sequence resource="EMBL-CDS" id="AAH16630"/>
    </conflict>
    <text>Extended N-terminus.</text>
</comment>
<comment type="sequence caution" evidence="7">
    <conflict type="erroneous initiation">
        <sequence resource="EMBL-CDS" id="AAH33687"/>
    </conflict>
    <text>Extended N-terminus.</text>
</comment>
<comment type="sequence caution" evidence="7">
    <conflict type="erroneous initiation">
        <sequence resource="EMBL-CDS" id="BAB70984"/>
    </conflict>
    <text>Truncated N-terminus.</text>
</comment>
<proteinExistence type="evidence at protein level"/>
<name>FMT_HUMAN</name>
<reference key="1">
    <citation type="journal article" date="2004" name="Nat. Genet.">
        <title>Complete sequencing and characterization of 21,243 full-length human cDNAs.</title>
        <authorList>
            <person name="Ota T."/>
            <person name="Suzuki Y."/>
            <person name="Nishikawa T."/>
            <person name="Otsuki T."/>
            <person name="Sugiyama T."/>
            <person name="Irie R."/>
            <person name="Wakamatsu A."/>
            <person name="Hayashi K."/>
            <person name="Sato H."/>
            <person name="Nagai K."/>
            <person name="Kimura K."/>
            <person name="Makita H."/>
            <person name="Sekine M."/>
            <person name="Obayashi M."/>
            <person name="Nishi T."/>
            <person name="Shibahara T."/>
            <person name="Tanaka T."/>
            <person name="Ishii S."/>
            <person name="Yamamoto J."/>
            <person name="Saito K."/>
            <person name="Kawai Y."/>
            <person name="Isono Y."/>
            <person name="Nakamura Y."/>
            <person name="Nagahari K."/>
            <person name="Murakami K."/>
            <person name="Yasuda T."/>
            <person name="Iwayanagi T."/>
            <person name="Wagatsuma M."/>
            <person name="Shiratori A."/>
            <person name="Sudo H."/>
            <person name="Hosoiri T."/>
            <person name="Kaku Y."/>
            <person name="Kodaira H."/>
            <person name="Kondo H."/>
            <person name="Sugawara M."/>
            <person name="Takahashi M."/>
            <person name="Kanda K."/>
            <person name="Yokoi T."/>
            <person name="Furuya T."/>
            <person name="Kikkawa E."/>
            <person name="Omura Y."/>
            <person name="Abe K."/>
            <person name="Kamihara K."/>
            <person name="Katsuta N."/>
            <person name="Sato K."/>
            <person name="Tanikawa M."/>
            <person name="Yamazaki M."/>
            <person name="Ninomiya K."/>
            <person name="Ishibashi T."/>
            <person name="Yamashita H."/>
            <person name="Murakawa K."/>
            <person name="Fujimori K."/>
            <person name="Tanai H."/>
            <person name="Kimata M."/>
            <person name="Watanabe M."/>
            <person name="Hiraoka S."/>
            <person name="Chiba Y."/>
            <person name="Ishida S."/>
            <person name="Ono Y."/>
            <person name="Takiguchi S."/>
            <person name="Watanabe S."/>
            <person name="Yosida M."/>
            <person name="Hotuta T."/>
            <person name="Kusano J."/>
            <person name="Kanehori K."/>
            <person name="Takahashi-Fujii A."/>
            <person name="Hara H."/>
            <person name="Tanase T.-O."/>
            <person name="Nomura Y."/>
            <person name="Togiya S."/>
            <person name="Komai F."/>
            <person name="Hara R."/>
            <person name="Takeuchi K."/>
            <person name="Arita M."/>
            <person name="Imose N."/>
            <person name="Musashino K."/>
            <person name="Yuuki H."/>
            <person name="Oshima A."/>
            <person name="Sasaki N."/>
            <person name="Aotsuka S."/>
            <person name="Yoshikawa Y."/>
            <person name="Matsunawa H."/>
            <person name="Ichihara T."/>
            <person name="Shiohata N."/>
            <person name="Sano S."/>
            <person name="Moriya S."/>
            <person name="Momiyama H."/>
            <person name="Satoh N."/>
            <person name="Takami S."/>
            <person name="Terashima Y."/>
            <person name="Suzuki O."/>
            <person name="Nakagawa S."/>
            <person name="Senoh A."/>
            <person name="Mizoguchi H."/>
            <person name="Goto Y."/>
            <person name="Shimizu F."/>
            <person name="Wakebe H."/>
            <person name="Hishigaki H."/>
            <person name="Watanabe T."/>
            <person name="Sugiyama A."/>
            <person name="Takemoto M."/>
            <person name="Kawakami B."/>
            <person name="Yamazaki M."/>
            <person name="Watanabe K."/>
            <person name="Kumagai A."/>
            <person name="Itakura S."/>
            <person name="Fukuzumi Y."/>
            <person name="Fujimori Y."/>
            <person name="Komiyama M."/>
            <person name="Tashiro H."/>
            <person name="Tanigami A."/>
            <person name="Fujiwara T."/>
            <person name="Ono T."/>
            <person name="Yamada K."/>
            <person name="Fujii Y."/>
            <person name="Ozaki K."/>
            <person name="Hirao M."/>
            <person name="Ohmori Y."/>
            <person name="Kawabata A."/>
            <person name="Hikiji T."/>
            <person name="Kobatake N."/>
            <person name="Inagaki H."/>
            <person name="Ikema Y."/>
            <person name="Okamoto S."/>
            <person name="Okitani R."/>
            <person name="Kawakami T."/>
            <person name="Noguchi S."/>
            <person name="Itoh T."/>
            <person name="Shigeta K."/>
            <person name="Senba T."/>
            <person name="Matsumura K."/>
            <person name="Nakajima Y."/>
            <person name="Mizuno T."/>
            <person name="Morinaga M."/>
            <person name="Sasaki M."/>
            <person name="Togashi T."/>
            <person name="Oyama M."/>
            <person name="Hata H."/>
            <person name="Watanabe M."/>
            <person name="Komatsu T."/>
            <person name="Mizushima-Sugano J."/>
            <person name="Satoh T."/>
            <person name="Shirai Y."/>
            <person name="Takahashi Y."/>
            <person name="Nakagawa K."/>
            <person name="Okumura K."/>
            <person name="Nagase T."/>
            <person name="Nomura N."/>
            <person name="Kikuchi H."/>
            <person name="Masuho Y."/>
            <person name="Yamashita R."/>
            <person name="Nakai K."/>
            <person name="Yada T."/>
            <person name="Nakamura Y."/>
            <person name="Ohara O."/>
            <person name="Isogai T."/>
            <person name="Sugano S."/>
        </authorList>
    </citation>
    <scope>NUCLEOTIDE SEQUENCE [LARGE SCALE MRNA] (ISOFORM 2)</scope>
    <scope>NUCLEOTIDE SEQUENCE [LARGE SCALE MRNA] OF 11-389 (ISOFORM 1)</scope>
    <source>
        <tissue>Neuroblastoma</tissue>
        <tissue>Synovium</tissue>
    </source>
</reference>
<reference key="2">
    <citation type="journal article" date="2006" name="Nature">
        <title>Analysis of the DNA sequence and duplication history of human chromosome 15.</title>
        <authorList>
            <person name="Zody M.C."/>
            <person name="Garber M."/>
            <person name="Sharpe T."/>
            <person name="Young S.K."/>
            <person name="Rowen L."/>
            <person name="O'Neill K."/>
            <person name="Whittaker C.A."/>
            <person name="Kamal M."/>
            <person name="Chang J.L."/>
            <person name="Cuomo C.A."/>
            <person name="Dewar K."/>
            <person name="FitzGerald M.G."/>
            <person name="Kodira C.D."/>
            <person name="Madan A."/>
            <person name="Qin S."/>
            <person name="Yang X."/>
            <person name="Abbasi N."/>
            <person name="Abouelleil A."/>
            <person name="Arachchi H.M."/>
            <person name="Baradarani L."/>
            <person name="Birditt B."/>
            <person name="Bloom S."/>
            <person name="Bloom T."/>
            <person name="Borowsky M.L."/>
            <person name="Burke J."/>
            <person name="Butler J."/>
            <person name="Cook A."/>
            <person name="DeArellano K."/>
            <person name="DeCaprio D."/>
            <person name="Dorris L. III"/>
            <person name="Dors M."/>
            <person name="Eichler E.E."/>
            <person name="Engels R."/>
            <person name="Fahey J."/>
            <person name="Fleetwood P."/>
            <person name="Friedman C."/>
            <person name="Gearin G."/>
            <person name="Hall J.L."/>
            <person name="Hensley G."/>
            <person name="Johnson E."/>
            <person name="Jones C."/>
            <person name="Kamat A."/>
            <person name="Kaur A."/>
            <person name="Locke D.P."/>
            <person name="Madan A."/>
            <person name="Munson G."/>
            <person name="Jaffe D.B."/>
            <person name="Lui A."/>
            <person name="Macdonald P."/>
            <person name="Mauceli E."/>
            <person name="Naylor J.W."/>
            <person name="Nesbitt R."/>
            <person name="Nicol R."/>
            <person name="O'Leary S.B."/>
            <person name="Ratcliffe A."/>
            <person name="Rounsley S."/>
            <person name="She X."/>
            <person name="Sneddon K.M.B."/>
            <person name="Stewart S."/>
            <person name="Sougnez C."/>
            <person name="Stone S.M."/>
            <person name="Topham K."/>
            <person name="Vincent D."/>
            <person name="Wang S."/>
            <person name="Zimmer A.R."/>
            <person name="Birren B.W."/>
            <person name="Hood L."/>
            <person name="Lander E.S."/>
            <person name="Nusbaum C."/>
        </authorList>
    </citation>
    <scope>NUCLEOTIDE SEQUENCE [LARGE SCALE GENOMIC DNA]</scope>
</reference>
<reference key="3">
    <citation type="journal article" date="2004" name="Genome Res.">
        <title>The status, quality, and expansion of the NIH full-length cDNA project: the Mammalian Gene Collection (MGC).</title>
        <authorList>
            <consortium name="The MGC Project Team"/>
        </authorList>
    </citation>
    <scope>NUCLEOTIDE SEQUENCE [LARGE SCALE MRNA] (ISOFORM 2)</scope>
    <source>
        <tissue>Brain</tissue>
        <tissue>Mammary gland</tissue>
    </source>
</reference>
<reference key="4">
    <citation type="journal article" date="2011" name="Cell Metab.">
        <title>Mutations in MTFMT underlie a human disorder of formylation causing impaired mitochondrial translation.</title>
        <authorList>
            <person name="Tucker E.J."/>
            <person name="Hershman S.G."/>
            <person name="Koehrer C."/>
            <person name="Belcher-Timme C.A."/>
            <person name="Patel J."/>
            <person name="Goldberger O.A."/>
            <person name="Christodoulou J."/>
            <person name="Silberstein J.M."/>
            <person name="McKenzie M."/>
            <person name="Ryan M.T."/>
            <person name="Compton A.G."/>
            <person name="Jaffe J.D."/>
            <person name="Carr S.A."/>
            <person name="Calvo S.E."/>
            <person name="RajBhandary U.L."/>
            <person name="Thorburn D.R."/>
            <person name="Mootha V.K."/>
        </authorList>
    </citation>
    <scope>VARIANTS COXPD15 LEU-125 AND LEU-209</scope>
    <scope>FUNCTION</scope>
    <scope>CATALYTIC ACTIVITY</scope>
</reference>
<reference key="5">
    <citation type="journal article" date="2012" name="J. Med. Genet.">
        <title>Molecular diagnosis in mitochondrial complex I deficiency using exome sequencing.</title>
        <authorList>
            <person name="Haack T.B."/>
            <person name="Haberberger B."/>
            <person name="Frisch E.M."/>
            <person name="Wieland T."/>
            <person name="Iuso A."/>
            <person name="Gorza M."/>
            <person name="Strecker V."/>
            <person name="Graf E."/>
            <person name="Mayr J.A."/>
            <person name="Herberg U."/>
            <person name="Hennermann J.B."/>
            <person name="Klopstock T."/>
            <person name="Kuhn K.A."/>
            <person name="Ahting U."/>
            <person name="Sperl W."/>
            <person name="Wilichowski E."/>
            <person name="Hoffmann G.F."/>
            <person name="Tesarova M."/>
            <person name="Hansikova H."/>
            <person name="Zeman J."/>
            <person name="Plecko B."/>
            <person name="Zeviani M."/>
            <person name="Wittig I."/>
            <person name="Strom T.M."/>
            <person name="Schuelke M."/>
            <person name="Freisinger P."/>
            <person name="Meitinger T."/>
            <person name="Prokisch H."/>
        </authorList>
    </citation>
    <scope>VARIANTS MC1DN27 LEU-209 AND 332-ARG--GLU-389 DEL</scope>
</reference>
<reference key="6">
    <citation type="journal article" date="2014" name="J. Biol. Chem.">
        <title>Biochemical characterization of pathogenic mutations in human mitochondrial methionyl-tRNA formyltransferase.</title>
        <authorList>
            <person name="Sinha A."/>
            <person name="Koehrer C."/>
            <person name="Weber M.H."/>
            <person name="Masuda I."/>
            <person name="Mootha V.K."/>
            <person name="Hou Y.M."/>
            <person name="RajBhandary U.L."/>
        </authorList>
    </citation>
    <scope>CHARACTERIZATION OF VARIANTS COXPD15 LEU-125 AND LEU-209</scope>
    <scope>FUNCTION</scope>
    <scope>CATALYTIC ACTIVITY</scope>
</reference>
<dbReference type="EC" id="2.1.2.9" evidence="3 5"/>
<dbReference type="EMBL" id="AK055688">
    <property type="protein sequence ID" value="BAB70984.1"/>
    <property type="status" value="ALT_INIT"/>
    <property type="molecule type" value="mRNA"/>
</dbReference>
<dbReference type="EMBL" id="AK301390">
    <property type="protein sequence ID" value="BAH13470.1"/>
    <property type="molecule type" value="mRNA"/>
</dbReference>
<dbReference type="EMBL" id="AC013553">
    <property type="status" value="NOT_ANNOTATED_CDS"/>
    <property type="molecule type" value="Genomic_DNA"/>
</dbReference>
<dbReference type="EMBL" id="AC103691">
    <property type="status" value="NOT_ANNOTATED_CDS"/>
    <property type="molecule type" value="Genomic_DNA"/>
</dbReference>
<dbReference type="EMBL" id="BC016630">
    <property type="protein sequence ID" value="AAH16630.2"/>
    <property type="status" value="ALT_INIT"/>
    <property type="molecule type" value="mRNA"/>
</dbReference>
<dbReference type="EMBL" id="BC033687">
    <property type="protein sequence ID" value="AAH33687.1"/>
    <property type="status" value="ALT_INIT"/>
    <property type="molecule type" value="mRNA"/>
</dbReference>
<dbReference type="CCDS" id="CCDS45280.1">
    <molecule id="Q96DP5-1"/>
</dbReference>
<dbReference type="RefSeq" id="NP_640335.2">
    <molecule id="Q96DP5-1"/>
    <property type="nucleotide sequence ID" value="NM_139242.4"/>
</dbReference>
<dbReference type="SMR" id="Q96DP5"/>
<dbReference type="BioGRID" id="125820">
    <property type="interactions" value="98"/>
</dbReference>
<dbReference type="FunCoup" id="Q96DP5">
    <property type="interactions" value="640"/>
</dbReference>
<dbReference type="IntAct" id="Q96DP5">
    <property type="interactions" value="9"/>
</dbReference>
<dbReference type="STRING" id="9606.ENSP00000220058"/>
<dbReference type="DrugBank" id="DB00116">
    <property type="generic name" value="Tetrahydrofolic acid"/>
</dbReference>
<dbReference type="iPTMnet" id="Q96DP5"/>
<dbReference type="PhosphoSitePlus" id="Q96DP5"/>
<dbReference type="BioMuta" id="MTFMT"/>
<dbReference type="DMDM" id="27923776"/>
<dbReference type="jPOST" id="Q96DP5"/>
<dbReference type="MassIVE" id="Q96DP5"/>
<dbReference type="PaxDb" id="9606-ENSP00000220058"/>
<dbReference type="PeptideAtlas" id="Q96DP5"/>
<dbReference type="ProteomicsDB" id="6828"/>
<dbReference type="ProteomicsDB" id="76304">
    <molecule id="Q96DP5-1"/>
</dbReference>
<dbReference type="Pumba" id="Q96DP5"/>
<dbReference type="Antibodypedia" id="25895">
    <property type="antibodies" value="174 antibodies from 15 providers"/>
</dbReference>
<dbReference type="DNASU" id="123263"/>
<dbReference type="Ensembl" id="ENST00000220058.9">
    <molecule id="Q96DP5-1"/>
    <property type="protein sequence ID" value="ENSP00000220058.4"/>
    <property type="gene ID" value="ENSG00000103707.10"/>
</dbReference>
<dbReference type="Ensembl" id="ENST00000543678.1">
    <molecule id="Q96DP5-2"/>
    <property type="protein sequence ID" value="ENSP00000443754.1"/>
    <property type="gene ID" value="ENSG00000103707.10"/>
</dbReference>
<dbReference type="Ensembl" id="ENST00000558460.5">
    <molecule id="Q96DP5-1"/>
    <property type="protein sequence ID" value="ENSP00000452646.1"/>
    <property type="gene ID" value="ENSG00000103707.10"/>
</dbReference>
<dbReference type="GeneID" id="123263"/>
<dbReference type="KEGG" id="hsa:123263"/>
<dbReference type="MANE-Select" id="ENST00000220058.9">
    <property type="protein sequence ID" value="ENSP00000220058.4"/>
    <property type="RefSeq nucleotide sequence ID" value="NM_139242.4"/>
    <property type="RefSeq protein sequence ID" value="NP_640335.2"/>
</dbReference>
<dbReference type="UCSC" id="uc002aof.5">
    <molecule id="Q96DP5-1"/>
    <property type="organism name" value="human"/>
</dbReference>
<dbReference type="AGR" id="HGNC:29666"/>
<dbReference type="CTD" id="123263"/>
<dbReference type="DisGeNET" id="123263"/>
<dbReference type="GeneCards" id="MTFMT"/>
<dbReference type="GeneReviews" id="MTFMT"/>
<dbReference type="HGNC" id="HGNC:29666">
    <property type="gene designation" value="MTFMT"/>
</dbReference>
<dbReference type="HPA" id="ENSG00000103707">
    <property type="expression patterns" value="Low tissue specificity"/>
</dbReference>
<dbReference type="MalaCards" id="MTFMT"/>
<dbReference type="MIM" id="611766">
    <property type="type" value="gene"/>
</dbReference>
<dbReference type="MIM" id="614947">
    <property type="type" value="phenotype"/>
</dbReference>
<dbReference type="MIM" id="618248">
    <property type="type" value="phenotype"/>
</dbReference>
<dbReference type="neXtProt" id="NX_Q96DP5"/>
<dbReference type="OpenTargets" id="ENSG00000103707"/>
<dbReference type="Orphanet" id="319524">
    <property type="disease" value="Combined oxidative phosphorylation defect type 15"/>
</dbReference>
<dbReference type="PharmGKB" id="PA142671304"/>
<dbReference type="VEuPathDB" id="HostDB:ENSG00000103707"/>
<dbReference type="eggNOG" id="KOG3082">
    <property type="taxonomic scope" value="Eukaryota"/>
</dbReference>
<dbReference type="GeneTree" id="ENSGT00390000017828"/>
<dbReference type="HOGENOM" id="CLU_033347_0_0_1"/>
<dbReference type="InParanoid" id="Q96DP5"/>
<dbReference type="OMA" id="GASPIHE"/>
<dbReference type="OrthoDB" id="10268103at2759"/>
<dbReference type="PAN-GO" id="Q96DP5">
    <property type="GO annotations" value="3 GO annotations based on evolutionary models"/>
</dbReference>
<dbReference type="PhylomeDB" id="Q96DP5"/>
<dbReference type="TreeFam" id="TF323405"/>
<dbReference type="BRENDA" id="2.1.2.9">
    <property type="organism ID" value="2681"/>
</dbReference>
<dbReference type="PathwayCommons" id="Q96DP5"/>
<dbReference type="Reactome" id="R-HSA-5368286">
    <property type="pathway name" value="Mitochondrial translation initiation"/>
</dbReference>
<dbReference type="SignaLink" id="Q96DP5"/>
<dbReference type="BioGRID-ORCS" id="123263">
    <property type="hits" value="154 hits in 1156 CRISPR screens"/>
</dbReference>
<dbReference type="ChiTaRS" id="MTFMT">
    <property type="organism name" value="human"/>
</dbReference>
<dbReference type="GeneWiki" id="MTFMT"/>
<dbReference type="GenomeRNAi" id="123263"/>
<dbReference type="Pharos" id="Q96DP5">
    <property type="development level" value="Tbio"/>
</dbReference>
<dbReference type="PRO" id="PR:Q96DP5"/>
<dbReference type="Proteomes" id="UP000005640">
    <property type="component" value="Chromosome 15"/>
</dbReference>
<dbReference type="RNAct" id="Q96DP5">
    <property type="molecule type" value="protein"/>
</dbReference>
<dbReference type="Bgee" id="ENSG00000103707">
    <property type="expression patterns" value="Expressed in left ventricle myocardium and 169 other cell types or tissues"/>
</dbReference>
<dbReference type="ExpressionAtlas" id="Q96DP5">
    <property type="expression patterns" value="baseline and differential"/>
</dbReference>
<dbReference type="GO" id="GO:0005739">
    <property type="term" value="C:mitochondrion"/>
    <property type="evidence" value="ECO:0006056"/>
    <property type="project" value="FlyBase"/>
</dbReference>
<dbReference type="GO" id="GO:0004479">
    <property type="term" value="F:methionyl-tRNA formyltransferase activity"/>
    <property type="evidence" value="ECO:0000314"/>
    <property type="project" value="UniProtKB"/>
</dbReference>
<dbReference type="GO" id="GO:0071951">
    <property type="term" value="P:conversion of methionyl-tRNA to N-formyl-methionyl-tRNA"/>
    <property type="evidence" value="ECO:0000314"/>
    <property type="project" value="UniProtKB"/>
</dbReference>
<dbReference type="CDD" id="cd08646">
    <property type="entry name" value="FMT_core_Met-tRNA-FMT_N"/>
    <property type="match status" value="1"/>
</dbReference>
<dbReference type="FunFam" id="3.40.50.12230:FF:000003">
    <property type="entry name" value="methionyl-tRNA formyltransferase, mitochondrial"/>
    <property type="match status" value="1"/>
</dbReference>
<dbReference type="Gene3D" id="3.40.50.12230">
    <property type="match status" value="1"/>
</dbReference>
<dbReference type="InterPro" id="IPR005794">
    <property type="entry name" value="Fmt"/>
</dbReference>
<dbReference type="InterPro" id="IPR005793">
    <property type="entry name" value="Formyl_trans_C"/>
</dbReference>
<dbReference type="InterPro" id="IPR002376">
    <property type="entry name" value="Formyl_transf_N"/>
</dbReference>
<dbReference type="InterPro" id="IPR036477">
    <property type="entry name" value="Formyl_transf_N_sf"/>
</dbReference>
<dbReference type="InterPro" id="IPR011034">
    <property type="entry name" value="Formyl_transferase-like_C_sf"/>
</dbReference>
<dbReference type="InterPro" id="IPR041711">
    <property type="entry name" value="Met-tRNA-FMT_N"/>
</dbReference>
<dbReference type="NCBIfam" id="TIGR00460">
    <property type="entry name" value="fmt"/>
    <property type="match status" value="1"/>
</dbReference>
<dbReference type="PANTHER" id="PTHR11138">
    <property type="entry name" value="METHIONYL-TRNA FORMYLTRANSFERASE"/>
    <property type="match status" value="1"/>
</dbReference>
<dbReference type="PANTHER" id="PTHR11138:SF5">
    <property type="entry name" value="METHIONYL-TRNA FORMYLTRANSFERASE, MITOCHONDRIAL"/>
    <property type="match status" value="1"/>
</dbReference>
<dbReference type="Pfam" id="PF02911">
    <property type="entry name" value="Formyl_trans_C"/>
    <property type="match status" value="1"/>
</dbReference>
<dbReference type="Pfam" id="PF00551">
    <property type="entry name" value="Formyl_trans_N"/>
    <property type="match status" value="1"/>
</dbReference>
<dbReference type="SUPFAM" id="SSF50486">
    <property type="entry name" value="FMT C-terminal domain-like"/>
    <property type="match status" value="1"/>
</dbReference>
<dbReference type="SUPFAM" id="SSF53328">
    <property type="entry name" value="Formyltransferase"/>
    <property type="match status" value="1"/>
</dbReference>
<gene>
    <name type="primary">MTFMT</name>
    <name type="synonym">FMT</name>
    <name type="synonym">FMT1</name>
</gene>
<organism>
    <name type="scientific">Homo sapiens</name>
    <name type="common">Human</name>
    <dbReference type="NCBI Taxonomy" id="9606"/>
    <lineage>
        <taxon>Eukaryota</taxon>
        <taxon>Metazoa</taxon>
        <taxon>Chordata</taxon>
        <taxon>Craniata</taxon>
        <taxon>Vertebrata</taxon>
        <taxon>Euteleostomi</taxon>
        <taxon>Mammalia</taxon>
        <taxon>Eutheria</taxon>
        <taxon>Euarchontoglires</taxon>
        <taxon>Primates</taxon>
        <taxon>Haplorrhini</taxon>
        <taxon>Catarrhini</taxon>
        <taxon>Hominidae</taxon>
        <taxon>Homo</taxon>
    </lineage>
</organism>
<protein>
    <recommendedName>
        <fullName>Methionyl-tRNA formyltransferase, mitochondrial</fullName>
        <shortName>MtFMT</shortName>
        <ecNumber evidence="3 5">2.1.2.9</ecNumber>
    </recommendedName>
</protein>
<keyword id="KW-0025">Alternative splicing</keyword>
<keyword id="KW-0225">Disease variant</keyword>
<keyword id="KW-0496">Mitochondrion</keyword>
<keyword id="KW-1274">Primary mitochondrial disease</keyword>
<keyword id="KW-0648">Protein biosynthesis</keyword>
<keyword id="KW-1267">Proteomics identification</keyword>
<keyword id="KW-1185">Reference proteome</keyword>
<keyword id="KW-0808">Transferase</keyword>
<keyword id="KW-0809">Transit peptide</keyword>
<sequence length="389" mass="43832">MRVLVRRCWGPPLAHGARRGRPSPQWRALARLGWEDCRDSRVREKPPWRVLFFGTDQFAREALRALHAARENKEEELIDKLEVVTMPSPSPKGLPVKQYAVQSQLPVYEWPDVGSGEYDVGVVASFGRLLNEALILKFPYGILNVHPSCLPRWRGPAPVIHTVLHGDTVTGVTIMQIRPKRFDVGPILKQETVPVPPKSTAKELEAVLSRLGANMLISVLKNLPESLSNGRQQPMEGATYAPKISAGTSCIKWEEQTSEQIFRLYRAIGNIIPLQTLWMANTIKLLDLVEVNSSVLADPKLTGQALIPGSVIYHKQSQILLVYCKDGWIGVRSVMLKKSLTATDFYNGYLHPWYQKNSQAQPSQCRFQTLRLPTKKKQKKTVAMQQCIE</sequence>